<protein>
    <recommendedName>
        <fullName evidence="1">Asparagine--tRNA ligase</fullName>
        <ecNumber evidence="1">6.1.1.22</ecNumber>
    </recommendedName>
    <alternativeName>
        <fullName evidence="1">Asparaginyl-tRNA synthetase</fullName>
        <shortName evidence="1">AsnRS</shortName>
    </alternativeName>
</protein>
<proteinExistence type="inferred from homology"/>
<dbReference type="EC" id="6.1.1.22" evidence="1"/>
<dbReference type="EMBL" id="CP000686">
    <property type="protein sequence ID" value="ABQ88668.1"/>
    <property type="molecule type" value="Genomic_DNA"/>
</dbReference>
<dbReference type="RefSeq" id="WP_011955027.1">
    <property type="nucleotide sequence ID" value="NC_009523.1"/>
</dbReference>
<dbReference type="SMR" id="A5UPW5"/>
<dbReference type="STRING" id="357808.RoseRS_0232"/>
<dbReference type="KEGG" id="rrs:RoseRS_0232"/>
<dbReference type="eggNOG" id="COG0017">
    <property type="taxonomic scope" value="Bacteria"/>
</dbReference>
<dbReference type="HOGENOM" id="CLU_004553_2_0_0"/>
<dbReference type="OrthoDB" id="9762036at2"/>
<dbReference type="Proteomes" id="UP000006554">
    <property type="component" value="Chromosome"/>
</dbReference>
<dbReference type="GO" id="GO:0005737">
    <property type="term" value="C:cytoplasm"/>
    <property type="evidence" value="ECO:0007669"/>
    <property type="project" value="UniProtKB-SubCell"/>
</dbReference>
<dbReference type="GO" id="GO:0004816">
    <property type="term" value="F:asparagine-tRNA ligase activity"/>
    <property type="evidence" value="ECO:0007669"/>
    <property type="project" value="UniProtKB-UniRule"/>
</dbReference>
<dbReference type="GO" id="GO:0005524">
    <property type="term" value="F:ATP binding"/>
    <property type="evidence" value="ECO:0007669"/>
    <property type="project" value="UniProtKB-UniRule"/>
</dbReference>
<dbReference type="GO" id="GO:0003676">
    <property type="term" value="F:nucleic acid binding"/>
    <property type="evidence" value="ECO:0007669"/>
    <property type="project" value="InterPro"/>
</dbReference>
<dbReference type="GO" id="GO:0006421">
    <property type="term" value="P:asparaginyl-tRNA aminoacylation"/>
    <property type="evidence" value="ECO:0007669"/>
    <property type="project" value="UniProtKB-UniRule"/>
</dbReference>
<dbReference type="CDD" id="cd00776">
    <property type="entry name" value="AsxRS_core"/>
    <property type="match status" value="1"/>
</dbReference>
<dbReference type="Gene3D" id="3.30.930.10">
    <property type="entry name" value="Bira Bifunctional Protein, Domain 2"/>
    <property type="match status" value="1"/>
</dbReference>
<dbReference type="Gene3D" id="2.40.50.140">
    <property type="entry name" value="Nucleic acid-binding proteins"/>
    <property type="match status" value="1"/>
</dbReference>
<dbReference type="HAMAP" id="MF_00534">
    <property type="entry name" value="Asn_tRNA_synth"/>
    <property type="match status" value="1"/>
</dbReference>
<dbReference type="InterPro" id="IPR004364">
    <property type="entry name" value="Aa-tRNA-synt_II"/>
</dbReference>
<dbReference type="InterPro" id="IPR006195">
    <property type="entry name" value="aa-tRNA-synth_II"/>
</dbReference>
<dbReference type="InterPro" id="IPR045864">
    <property type="entry name" value="aa-tRNA-synth_II/BPL/LPL"/>
</dbReference>
<dbReference type="InterPro" id="IPR004522">
    <property type="entry name" value="Asn-tRNA-ligase"/>
</dbReference>
<dbReference type="InterPro" id="IPR002312">
    <property type="entry name" value="Asp/Asn-tRNA-synth_IIb"/>
</dbReference>
<dbReference type="InterPro" id="IPR012340">
    <property type="entry name" value="NA-bd_OB-fold"/>
</dbReference>
<dbReference type="InterPro" id="IPR004365">
    <property type="entry name" value="NA-bd_OB_tRNA"/>
</dbReference>
<dbReference type="NCBIfam" id="TIGR00457">
    <property type="entry name" value="asnS"/>
    <property type="match status" value="1"/>
</dbReference>
<dbReference type="NCBIfam" id="NF003037">
    <property type="entry name" value="PRK03932.1"/>
    <property type="match status" value="1"/>
</dbReference>
<dbReference type="PANTHER" id="PTHR22594:SF34">
    <property type="entry name" value="ASPARAGINE--TRNA LIGASE, MITOCHONDRIAL-RELATED"/>
    <property type="match status" value="1"/>
</dbReference>
<dbReference type="PANTHER" id="PTHR22594">
    <property type="entry name" value="ASPARTYL/LYSYL-TRNA SYNTHETASE"/>
    <property type="match status" value="1"/>
</dbReference>
<dbReference type="Pfam" id="PF00152">
    <property type="entry name" value="tRNA-synt_2"/>
    <property type="match status" value="1"/>
</dbReference>
<dbReference type="Pfam" id="PF01336">
    <property type="entry name" value="tRNA_anti-codon"/>
    <property type="match status" value="1"/>
</dbReference>
<dbReference type="PRINTS" id="PR01042">
    <property type="entry name" value="TRNASYNTHASP"/>
</dbReference>
<dbReference type="SUPFAM" id="SSF55681">
    <property type="entry name" value="Class II aaRS and biotin synthetases"/>
    <property type="match status" value="1"/>
</dbReference>
<dbReference type="SUPFAM" id="SSF50249">
    <property type="entry name" value="Nucleic acid-binding proteins"/>
    <property type="match status" value="1"/>
</dbReference>
<dbReference type="PROSITE" id="PS50862">
    <property type="entry name" value="AA_TRNA_LIGASE_II"/>
    <property type="match status" value="1"/>
</dbReference>
<reference key="1">
    <citation type="submission" date="2007-04" db="EMBL/GenBank/DDBJ databases">
        <title>Complete sequence of Roseiflexus sp. RS-1.</title>
        <authorList>
            <consortium name="US DOE Joint Genome Institute"/>
            <person name="Copeland A."/>
            <person name="Lucas S."/>
            <person name="Lapidus A."/>
            <person name="Barry K."/>
            <person name="Detter J.C."/>
            <person name="Glavina del Rio T."/>
            <person name="Hammon N."/>
            <person name="Israni S."/>
            <person name="Dalin E."/>
            <person name="Tice H."/>
            <person name="Pitluck S."/>
            <person name="Chertkov O."/>
            <person name="Brettin T."/>
            <person name="Bruce D."/>
            <person name="Han C."/>
            <person name="Schmutz J."/>
            <person name="Larimer F."/>
            <person name="Land M."/>
            <person name="Hauser L."/>
            <person name="Kyrpides N."/>
            <person name="Mikhailova N."/>
            <person name="Bryant D.A."/>
            <person name="Richardson P."/>
        </authorList>
    </citation>
    <scope>NUCLEOTIDE SEQUENCE [LARGE SCALE GENOMIC DNA]</scope>
    <source>
        <strain>RS-1</strain>
    </source>
</reference>
<feature type="chain" id="PRO_1000072531" description="Asparagine--tRNA ligase">
    <location>
        <begin position="1"/>
        <end position="440"/>
    </location>
</feature>
<organism>
    <name type="scientific">Roseiflexus sp. (strain RS-1)</name>
    <dbReference type="NCBI Taxonomy" id="357808"/>
    <lineage>
        <taxon>Bacteria</taxon>
        <taxon>Bacillati</taxon>
        <taxon>Chloroflexota</taxon>
        <taxon>Chloroflexia</taxon>
        <taxon>Chloroflexales</taxon>
        <taxon>Roseiflexineae</taxon>
        <taxon>Roseiflexaceae</taxon>
        <taxon>Roseiflexus</taxon>
    </lineage>
</organism>
<accession>A5UPW5</accession>
<gene>
    <name evidence="1" type="primary">asnS</name>
    <name type="ordered locus">RoseRS_0232</name>
</gene>
<sequence length="440" mass="49719">MSLLPTATISTIAHHNGEVVTLAGWVVHKTEKGKLVFIRLRDGSGVIQCVVFRNNVTEATFAAAQQLTIESSCRITGAVRADARAPGGFELDVNAIEIIQIAPEYPIQPKEHGVEFLMEHRHLWIRSSKQHALLRIRAEIIAAAQEWLNDQGFVRFDTPILTPCAAEGTTNLFATPYFDLGTAYLGQTGQLYVEAGMMSFGKVYCFGPTFRAEKSKTRRHLTEFWMIEPEVAFALHEDNLALQERFVSAIVQRVLERRADDLATLERDTKPLERCVPPFPRITYDEALKLIAERHADVEGCTPLEWGEDLGAPHETLIASLFDRPVFVERFPSAIKAFYMEPDPQRPEVALCADLLAPEGYGEIIGGSQRIHDPALLERRIREYGLNVDDYQWYIDLRRYGSVPHSGFGMGIERATAWIAGTHHIRETIPFPRMLYRMYP</sequence>
<evidence type="ECO:0000255" key="1">
    <source>
        <dbReference type="HAMAP-Rule" id="MF_00534"/>
    </source>
</evidence>
<keyword id="KW-0030">Aminoacyl-tRNA synthetase</keyword>
<keyword id="KW-0067">ATP-binding</keyword>
<keyword id="KW-0963">Cytoplasm</keyword>
<keyword id="KW-0436">Ligase</keyword>
<keyword id="KW-0547">Nucleotide-binding</keyword>
<keyword id="KW-0648">Protein biosynthesis</keyword>
<comment type="catalytic activity">
    <reaction evidence="1">
        <text>tRNA(Asn) + L-asparagine + ATP = L-asparaginyl-tRNA(Asn) + AMP + diphosphate + H(+)</text>
        <dbReference type="Rhea" id="RHEA:11180"/>
        <dbReference type="Rhea" id="RHEA-COMP:9659"/>
        <dbReference type="Rhea" id="RHEA-COMP:9674"/>
        <dbReference type="ChEBI" id="CHEBI:15378"/>
        <dbReference type="ChEBI" id="CHEBI:30616"/>
        <dbReference type="ChEBI" id="CHEBI:33019"/>
        <dbReference type="ChEBI" id="CHEBI:58048"/>
        <dbReference type="ChEBI" id="CHEBI:78442"/>
        <dbReference type="ChEBI" id="CHEBI:78515"/>
        <dbReference type="ChEBI" id="CHEBI:456215"/>
        <dbReference type="EC" id="6.1.1.22"/>
    </reaction>
</comment>
<comment type="subunit">
    <text evidence="1">Homodimer.</text>
</comment>
<comment type="subcellular location">
    <subcellularLocation>
        <location evidence="1">Cytoplasm</location>
    </subcellularLocation>
</comment>
<comment type="similarity">
    <text evidence="1">Belongs to the class-II aminoacyl-tRNA synthetase family.</text>
</comment>
<name>SYN_ROSS1</name>